<evidence type="ECO:0000255" key="1">
    <source>
        <dbReference type="HAMAP-Rule" id="MF_01859"/>
    </source>
</evidence>
<proteinExistence type="inferred from homology"/>
<organism>
    <name type="scientific">Shewanella baltica (strain OS195)</name>
    <dbReference type="NCBI Taxonomy" id="399599"/>
    <lineage>
        <taxon>Bacteria</taxon>
        <taxon>Pseudomonadati</taxon>
        <taxon>Pseudomonadota</taxon>
        <taxon>Gammaproteobacteria</taxon>
        <taxon>Alteromonadales</taxon>
        <taxon>Shewanellaceae</taxon>
        <taxon>Shewanella</taxon>
    </lineage>
</organism>
<name>RLMG_SHEB9</name>
<feature type="chain" id="PRO_0000366507" description="Ribosomal RNA large subunit methyltransferase G">
    <location>
        <begin position="1"/>
        <end position="378"/>
    </location>
</feature>
<dbReference type="EC" id="2.1.1.174" evidence="1"/>
<dbReference type="EMBL" id="CP000891">
    <property type="protein sequence ID" value="ABX50731.1"/>
    <property type="molecule type" value="Genomic_DNA"/>
</dbReference>
<dbReference type="RefSeq" id="WP_012197579.1">
    <property type="nucleotide sequence ID" value="NC_009997.1"/>
</dbReference>
<dbReference type="SMR" id="A9L0V0"/>
<dbReference type="KEGG" id="sbn:Sbal195_3569"/>
<dbReference type="HOGENOM" id="CLU_040288_4_0_6"/>
<dbReference type="Proteomes" id="UP000000770">
    <property type="component" value="Chromosome"/>
</dbReference>
<dbReference type="GO" id="GO:0005737">
    <property type="term" value="C:cytoplasm"/>
    <property type="evidence" value="ECO:0007669"/>
    <property type="project" value="UniProtKB-SubCell"/>
</dbReference>
<dbReference type="GO" id="GO:0052916">
    <property type="term" value="F:23S rRNA (guanine(1835)-N(2))-methyltransferase activity"/>
    <property type="evidence" value="ECO:0007669"/>
    <property type="project" value="UniProtKB-EC"/>
</dbReference>
<dbReference type="GO" id="GO:0003676">
    <property type="term" value="F:nucleic acid binding"/>
    <property type="evidence" value="ECO:0007669"/>
    <property type="project" value="InterPro"/>
</dbReference>
<dbReference type="CDD" id="cd02440">
    <property type="entry name" value="AdoMet_MTases"/>
    <property type="match status" value="1"/>
</dbReference>
<dbReference type="Gene3D" id="3.40.50.150">
    <property type="entry name" value="Vaccinia Virus protein VP39"/>
    <property type="match status" value="2"/>
</dbReference>
<dbReference type="HAMAP" id="MF_01859">
    <property type="entry name" value="23SrRNA_methyltr_G"/>
    <property type="match status" value="1"/>
</dbReference>
<dbReference type="InterPro" id="IPR002052">
    <property type="entry name" value="DNA_methylase_N6_adenine_CS"/>
</dbReference>
<dbReference type="InterPro" id="IPR017237">
    <property type="entry name" value="rRNA_m2G-MeTrfase_RlmG"/>
</dbReference>
<dbReference type="InterPro" id="IPR046977">
    <property type="entry name" value="RsmC/RlmG"/>
</dbReference>
<dbReference type="InterPro" id="IPR029063">
    <property type="entry name" value="SAM-dependent_MTases_sf"/>
</dbReference>
<dbReference type="InterPro" id="IPR007848">
    <property type="entry name" value="Small_mtfrase_dom"/>
</dbReference>
<dbReference type="PANTHER" id="PTHR47816:SF5">
    <property type="entry name" value="RIBOSOMAL RNA LARGE SUBUNIT METHYLTRANSFERASE G"/>
    <property type="match status" value="1"/>
</dbReference>
<dbReference type="PANTHER" id="PTHR47816">
    <property type="entry name" value="RIBOSOMAL RNA SMALL SUBUNIT METHYLTRANSFERASE C"/>
    <property type="match status" value="1"/>
</dbReference>
<dbReference type="Pfam" id="PF05175">
    <property type="entry name" value="MTS"/>
    <property type="match status" value="1"/>
</dbReference>
<dbReference type="PIRSF" id="PIRSF037565">
    <property type="entry name" value="RRNA_m2G_Mtase_RsmD_prd"/>
    <property type="match status" value="1"/>
</dbReference>
<dbReference type="SUPFAM" id="SSF53335">
    <property type="entry name" value="S-adenosyl-L-methionine-dependent methyltransferases"/>
    <property type="match status" value="1"/>
</dbReference>
<comment type="function">
    <text evidence="1">Specifically methylates the guanine in position 1835 (m2G1835) of 23S rRNA.</text>
</comment>
<comment type="catalytic activity">
    <reaction evidence="1">
        <text>guanosine(1835) in 23S rRNA + S-adenosyl-L-methionine = N(2)-methylguanosine(1835) in 23S rRNA + S-adenosyl-L-homocysteine + H(+)</text>
        <dbReference type="Rhea" id="RHEA:42744"/>
        <dbReference type="Rhea" id="RHEA-COMP:10217"/>
        <dbReference type="Rhea" id="RHEA-COMP:10218"/>
        <dbReference type="ChEBI" id="CHEBI:15378"/>
        <dbReference type="ChEBI" id="CHEBI:57856"/>
        <dbReference type="ChEBI" id="CHEBI:59789"/>
        <dbReference type="ChEBI" id="CHEBI:74269"/>
        <dbReference type="ChEBI" id="CHEBI:74481"/>
        <dbReference type="EC" id="2.1.1.174"/>
    </reaction>
</comment>
<comment type="subcellular location">
    <subcellularLocation>
        <location evidence="1">Cytoplasm</location>
    </subcellularLocation>
</comment>
<comment type="similarity">
    <text evidence="1">Belongs to the methyltransferase superfamily. RlmG family.</text>
</comment>
<protein>
    <recommendedName>
        <fullName evidence="1">Ribosomal RNA large subunit methyltransferase G</fullName>
        <ecNumber evidence="1">2.1.1.174</ecNumber>
    </recommendedName>
    <alternativeName>
        <fullName evidence="1">23S rRNA m2G1835 methyltransferase</fullName>
    </alternativeName>
    <alternativeName>
        <fullName evidence="1">rRNA (guanine-N(2)-)-methyltransferase RlmG</fullName>
    </alternativeName>
</protein>
<gene>
    <name evidence="1" type="primary">rlmG</name>
    <name type="ordered locus">Sbal195_3569</name>
</gene>
<accession>A9L0V0</accession>
<reference key="1">
    <citation type="submission" date="2007-11" db="EMBL/GenBank/DDBJ databases">
        <title>Complete sequence of chromosome of Shewanella baltica OS195.</title>
        <authorList>
            <consortium name="US DOE Joint Genome Institute"/>
            <person name="Copeland A."/>
            <person name="Lucas S."/>
            <person name="Lapidus A."/>
            <person name="Barry K."/>
            <person name="Glavina del Rio T."/>
            <person name="Dalin E."/>
            <person name="Tice H."/>
            <person name="Pitluck S."/>
            <person name="Chain P."/>
            <person name="Malfatti S."/>
            <person name="Shin M."/>
            <person name="Vergez L."/>
            <person name="Schmutz J."/>
            <person name="Larimer F."/>
            <person name="Land M."/>
            <person name="Hauser L."/>
            <person name="Kyrpides N."/>
            <person name="Kim E."/>
            <person name="Brettar I."/>
            <person name="Rodrigues J."/>
            <person name="Konstantinidis K."/>
            <person name="Klappenbach J."/>
            <person name="Hofle M."/>
            <person name="Tiedje J."/>
            <person name="Richardson P."/>
        </authorList>
    </citation>
    <scope>NUCLEOTIDE SEQUENCE [LARGE SCALE GENOMIC DNA]</scope>
    <source>
        <strain>OS195</strain>
    </source>
</reference>
<sequence>MTTQFSVAGVELELLRYPAQQESNLQAWDAADEHLLKSLIESEQAAVPTAIINDSFGALSCGVSKLNPSWPLCVETDARTSFLGTEQNHGRNQLPLDNLQWFTSRDTLPENLALVLMKLPKNLSYFAHQLTRLSQVLPAGTRVLVAAKAKSINGALLDIFAKHLGPASASLAWKNTRVITCVSDGKPRPLAKEVTWTVPEYQLEISNLSNVFAANKLDIGARIMLENLPKGDFKSIVDLGCGNGVLGLRTAQLFPEADIHFIDDSEMAVASAKANWARNQLPADKGHFYWDDCMTHLPEEVQPDLVLCNPPFHQGEAITDHIAWQMFLDARRRLKDGGILHIVGNRHLAYHVKLQRLFKNCTTVASNGKFVILQAQKK</sequence>
<keyword id="KW-0963">Cytoplasm</keyword>
<keyword id="KW-0489">Methyltransferase</keyword>
<keyword id="KW-0698">rRNA processing</keyword>
<keyword id="KW-0949">S-adenosyl-L-methionine</keyword>
<keyword id="KW-0808">Transferase</keyword>